<keyword id="KW-0687">Ribonucleoprotein</keyword>
<keyword id="KW-0689">Ribosomal protein</keyword>
<keyword id="KW-0694">RNA-binding</keyword>
<keyword id="KW-0699">rRNA-binding</keyword>
<sequence>MTDLRHYDVIVSPAITEKSTLVSENNQVVFNVAKQATKPEIKAAVEALFGVKVTAVNTLLRKGKTKRFRGFVGKQKDVKKAVVTLAEGQTIDVSTGL</sequence>
<dbReference type="EMBL" id="CP001074">
    <property type="protein sequence ID" value="ACE90721.1"/>
    <property type="molecule type" value="Genomic_DNA"/>
</dbReference>
<dbReference type="SMR" id="B3PWS3"/>
<dbReference type="KEGG" id="rec:RHECIAT_CH0001751"/>
<dbReference type="eggNOG" id="COG0089">
    <property type="taxonomic scope" value="Bacteria"/>
</dbReference>
<dbReference type="HOGENOM" id="CLU_037562_3_1_5"/>
<dbReference type="Proteomes" id="UP000008817">
    <property type="component" value="Chromosome"/>
</dbReference>
<dbReference type="GO" id="GO:1990904">
    <property type="term" value="C:ribonucleoprotein complex"/>
    <property type="evidence" value="ECO:0007669"/>
    <property type="project" value="UniProtKB-KW"/>
</dbReference>
<dbReference type="GO" id="GO:0005840">
    <property type="term" value="C:ribosome"/>
    <property type="evidence" value="ECO:0007669"/>
    <property type="project" value="UniProtKB-KW"/>
</dbReference>
<dbReference type="GO" id="GO:0019843">
    <property type="term" value="F:rRNA binding"/>
    <property type="evidence" value="ECO:0007669"/>
    <property type="project" value="UniProtKB-UniRule"/>
</dbReference>
<dbReference type="GO" id="GO:0003735">
    <property type="term" value="F:structural constituent of ribosome"/>
    <property type="evidence" value="ECO:0007669"/>
    <property type="project" value="InterPro"/>
</dbReference>
<dbReference type="GO" id="GO:0006412">
    <property type="term" value="P:translation"/>
    <property type="evidence" value="ECO:0007669"/>
    <property type="project" value="UniProtKB-UniRule"/>
</dbReference>
<dbReference type="FunFam" id="3.30.70.330:FF:000001">
    <property type="entry name" value="50S ribosomal protein L23"/>
    <property type="match status" value="1"/>
</dbReference>
<dbReference type="Gene3D" id="3.30.70.330">
    <property type="match status" value="1"/>
</dbReference>
<dbReference type="HAMAP" id="MF_01369_B">
    <property type="entry name" value="Ribosomal_uL23_B"/>
    <property type="match status" value="1"/>
</dbReference>
<dbReference type="InterPro" id="IPR012677">
    <property type="entry name" value="Nucleotide-bd_a/b_plait_sf"/>
</dbReference>
<dbReference type="InterPro" id="IPR013025">
    <property type="entry name" value="Ribosomal_uL23-like"/>
</dbReference>
<dbReference type="InterPro" id="IPR012678">
    <property type="entry name" value="Ribosomal_uL23/eL15/eS24_sf"/>
</dbReference>
<dbReference type="NCBIfam" id="NF004359">
    <property type="entry name" value="PRK05738.1-3"/>
    <property type="match status" value="1"/>
</dbReference>
<dbReference type="NCBIfam" id="NF004360">
    <property type="entry name" value="PRK05738.1-5"/>
    <property type="match status" value="1"/>
</dbReference>
<dbReference type="NCBIfam" id="NF004363">
    <property type="entry name" value="PRK05738.2-4"/>
    <property type="match status" value="1"/>
</dbReference>
<dbReference type="PANTHER" id="PTHR11620">
    <property type="entry name" value="60S RIBOSOMAL PROTEIN L23A"/>
    <property type="match status" value="1"/>
</dbReference>
<dbReference type="Pfam" id="PF00276">
    <property type="entry name" value="Ribosomal_L23"/>
    <property type="match status" value="1"/>
</dbReference>
<dbReference type="SUPFAM" id="SSF54189">
    <property type="entry name" value="Ribosomal proteins S24e, L23 and L15e"/>
    <property type="match status" value="1"/>
</dbReference>
<comment type="function">
    <text evidence="1">One of the early assembly proteins it binds 23S rRNA. One of the proteins that surrounds the polypeptide exit tunnel on the outside of the ribosome. Forms the main docking site for trigger factor binding to the ribosome.</text>
</comment>
<comment type="subunit">
    <text evidence="1">Part of the 50S ribosomal subunit. Contacts protein L29, and trigger factor when it is bound to the ribosome.</text>
</comment>
<comment type="similarity">
    <text evidence="1">Belongs to the universal ribosomal protein uL23 family.</text>
</comment>
<gene>
    <name evidence="1" type="primary">rplW</name>
    <name type="ordered locus">RHECIAT_CH0001751</name>
</gene>
<reference key="1">
    <citation type="journal article" date="2010" name="Appl. Environ. Microbiol.">
        <title>Conserved symbiotic plasmid DNA sequences in the multireplicon pangenomic structure of Rhizobium etli.</title>
        <authorList>
            <person name="Gonzalez V."/>
            <person name="Acosta J.L."/>
            <person name="Santamaria R.I."/>
            <person name="Bustos P."/>
            <person name="Fernandez J.L."/>
            <person name="Hernandez Gonzalez I.L."/>
            <person name="Diaz R."/>
            <person name="Flores M."/>
            <person name="Palacios R."/>
            <person name="Mora J."/>
            <person name="Davila G."/>
        </authorList>
    </citation>
    <scope>NUCLEOTIDE SEQUENCE [LARGE SCALE GENOMIC DNA]</scope>
    <source>
        <strain>CIAT 652</strain>
    </source>
</reference>
<evidence type="ECO:0000255" key="1">
    <source>
        <dbReference type="HAMAP-Rule" id="MF_01369"/>
    </source>
</evidence>
<evidence type="ECO:0000305" key="2"/>
<name>RL23_RHIE6</name>
<organism>
    <name type="scientific">Rhizobium etli (strain CIAT 652)</name>
    <dbReference type="NCBI Taxonomy" id="491916"/>
    <lineage>
        <taxon>Bacteria</taxon>
        <taxon>Pseudomonadati</taxon>
        <taxon>Pseudomonadota</taxon>
        <taxon>Alphaproteobacteria</taxon>
        <taxon>Hyphomicrobiales</taxon>
        <taxon>Rhizobiaceae</taxon>
        <taxon>Rhizobium/Agrobacterium group</taxon>
        <taxon>Rhizobium</taxon>
    </lineage>
</organism>
<accession>B3PWS3</accession>
<feature type="chain" id="PRO_1000144603" description="Large ribosomal subunit protein uL23">
    <location>
        <begin position="1"/>
        <end position="97"/>
    </location>
</feature>
<proteinExistence type="inferred from homology"/>
<protein>
    <recommendedName>
        <fullName evidence="1">Large ribosomal subunit protein uL23</fullName>
    </recommendedName>
    <alternativeName>
        <fullName evidence="2">50S ribosomal protein L23</fullName>
    </alternativeName>
</protein>